<proteinExistence type="evidence at protein level"/>
<protein>
    <recommendedName>
        <fullName>Synaptopodin 2-like protein</fullName>
    </recommendedName>
</protein>
<comment type="function">
    <text evidence="1">Actin-associated protein that may play a role in modulating actin-based shape.</text>
</comment>
<comment type="subcellular location">
    <subcellularLocation>
        <location evidence="1">Cytoplasm</location>
        <location evidence="1">Cytoskeleton</location>
    </subcellularLocation>
</comment>
<comment type="similarity">
    <text evidence="4">Belongs to the synaptopodin family.</text>
</comment>
<sequence>MGAEEEVQVTLAGGAPWGFRLQGGTEQRKPLQIRRRSQAGRAGLRERDQLLAINGVSCTNFSHASAMTLIDASGRQLVLTVRRVTDEGSVRSPSPGELQVLSPLSPLSPEPPGAPVSQALQPTSLRSPPDSEAYYGETDSDVDGPATQEKPRRTRRRGPARPSLPGAPPDEVYLSDSPAEPAPVKTGSPSQGDSRVSSPSWEEGAALQPPPAEALLLPHGPLRPGPHLIPMVGPVPHPVAEDLTTTYTQKAKQAKLQRAESLQEKSVKEARTKCRTIASLLTAAPNPHSKGVLMFKKRRQRAKKYTLVSFGAAAGTGTEEEDGIPPTSESELDEETFSDARSLTNQSDWDSPYLDMELARAGLGTAESQNSGLGGQLSEVSGRGVQLFEQQRQRVASSSQELAQVGPAAMLNGQSLQSPPRAQSAPPEAAVLPLSPLSVPAVSPTPFFPDGGAPIPAPSIFNRSARPFTPGLQGQRSGTTSVIFRPLAPKKVNEGLGSTSPAPSPFAAPPQGPTPLPSFTTVVPSHTPVSGASSSTQRSSGPVTATSSLYIPAPSRPVTPGGAPEPPTPPSAAAMTSTASIFLSTPLRNSARPEAPGPAVPEPASVREQRISVPAARTGILQEARRRGTRKQMFRPGKEETKNSPNPELLSLVQNLDEKPRAGGAESGPEEDALSLGAEACNFMQPLGGRSYKTLPQVSPKTPPPMAPKTPPPTTPKTPPPVAPKPGSRGLLDGLVNGSTPMVGIPEPPRLQGRGGELFAKRQSRADRYVVEATSGSSLNPGLRPRSPSPTPSLPPSWKYSPNIRAPPPIAYNPLLSPFFPQAARTLPNKAQSQGPRVTPKQGIKALDFMRHQPYQLKTAMFCFDEGSSTPGPTSGPPKTARVQEIRRFSTPAPQPTAEPLAPTVLVPRAATTLDEPIWRAELASTPVPNPDHQESLRSFAAAPSSCGFQVARPRFSATRTGLQAHVWRPGAGHQ</sequence>
<reference key="1">
    <citation type="journal article" date="2005" name="Science">
        <title>The transcriptional landscape of the mammalian genome.</title>
        <authorList>
            <person name="Carninci P."/>
            <person name="Kasukawa T."/>
            <person name="Katayama S."/>
            <person name="Gough J."/>
            <person name="Frith M.C."/>
            <person name="Maeda N."/>
            <person name="Oyama R."/>
            <person name="Ravasi T."/>
            <person name="Lenhard B."/>
            <person name="Wells C."/>
            <person name="Kodzius R."/>
            <person name="Shimokawa K."/>
            <person name="Bajic V.B."/>
            <person name="Brenner S.E."/>
            <person name="Batalov S."/>
            <person name="Forrest A.R."/>
            <person name="Zavolan M."/>
            <person name="Davis M.J."/>
            <person name="Wilming L.G."/>
            <person name="Aidinis V."/>
            <person name="Allen J.E."/>
            <person name="Ambesi-Impiombato A."/>
            <person name="Apweiler R."/>
            <person name="Aturaliya R.N."/>
            <person name="Bailey T.L."/>
            <person name="Bansal M."/>
            <person name="Baxter L."/>
            <person name="Beisel K.W."/>
            <person name="Bersano T."/>
            <person name="Bono H."/>
            <person name="Chalk A.M."/>
            <person name="Chiu K.P."/>
            <person name="Choudhary V."/>
            <person name="Christoffels A."/>
            <person name="Clutterbuck D.R."/>
            <person name="Crowe M.L."/>
            <person name="Dalla E."/>
            <person name="Dalrymple B.P."/>
            <person name="de Bono B."/>
            <person name="Della Gatta G."/>
            <person name="di Bernardo D."/>
            <person name="Down T."/>
            <person name="Engstrom P."/>
            <person name="Fagiolini M."/>
            <person name="Faulkner G."/>
            <person name="Fletcher C.F."/>
            <person name="Fukushima T."/>
            <person name="Furuno M."/>
            <person name="Futaki S."/>
            <person name="Gariboldi M."/>
            <person name="Georgii-Hemming P."/>
            <person name="Gingeras T.R."/>
            <person name="Gojobori T."/>
            <person name="Green R.E."/>
            <person name="Gustincich S."/>
            <person name="Harbers M."/>
            <person name="Hayashi Y."/>
            <person name="Hensch T.K."/>
            <person name="Hirokawa N."/>
            <person name="Hill D."/>
            <person name="Huminiecki L."/>
            <person name="Iacono M."/>
            <person name="Ikeo K."/>
            <person name="Iwama A."/>
            <person name="Ishikawa T."/>
            <person name="Jakt M."/>
            <person name="Kanapin A."/>
            <person name="Katoh M."/>
            <person name="Kawasawa Y."/>
            <person name="Kelso J."/>
            <person name="Kitamura H."/>
            <person name="Kitano H."/>
            <person name="Kollias G."/>
            <person name="Krishnan S.P."/>
            <person name="Kruger A."/>
            <person name="Kummerfeld S.K."/>
            <person name="Kurochkin I.V."/>
            <person name="Lareau L.F."/>
            <person name="Lazarevic D."/>
            <person name="Lipovich L."/>
            <person name="Liu J."/>
            <person name="Liuni S."/>
            <person name="McWilliam S."/>
            <person name="Madan Babu M."/>
            <person name="Madera M."/>
            <person name="Marchionni L."/>
            <person name="Matsuda H."/>
            <person name="Matsuzawa S."/>
            <person name="Miki H."/>
            <person name="Mignone F."/>
            <person name="Miyake S."/>
            <person name="Morris K."/>
            <person name="Mottagui-Tabar S."/>
            <person name="Mulder N."/>
            <person name="Nakano N."/>
            <person name="Nakauchi H."/>
            <person name="Ng P."/>
            <person name="Nilsson R."/>
            <person name="Nishiguchi S."/>
            <person name="Nishikawa S."/>
            <person name="Nori F."/>
            <person name="Ohara O."/>
            <person name="Okazaki Y."/>
            <person name="Orlando V."/>
            <person name="Pang K.C."/>
            <person name="Pavan W.J."/>
            <person name="Pavesi G."/>
            <person name="Pesole G."/>
            <person name="Petrovsky N."/>
            <person name="Piazza S."/>
            <person name="Reed J."/>
            <person name="Reid J.F."/>
            <person name="Ring B.Z."/>
            <person name="Ringwald M."/>
            <person name="Rost B."/>
            <person name="Ruan Y."/>
            <person name="Salzberg S.L."/>
            <person name="Sandelin A."/>
            <person name="Schneider C."/>
            <person name="Schoenbach C."/>
            <person name="Sekiguchi K."/>
            <person name="Semple C.A."/>
            <person name="Seno S."/>
            <person name="Sessa L."/>
            <person name="Sheng Y."/>
            <person name="Shibata Y."/>
            <person name="Shimada H."/>
            <person name="Shimada K."/>
            <person name="Silva D."/>
            <person name="Sinclair B."/>
            <person name="Sperling S."/>
            <person name="Stupka E."/>
            <person name="Sugiura K."/>
            <person name="Sultana R."/>
            <person name="Takenaka Y."/>
            <person name="Taki K."/>
            <person name="Tammoja K."/>
            <person name="Tan S.L."/>
            <person name="Tang S."/>
            <person name="Taylor M.S."/>
            <person name="Tegner J."/>
            <person name="Teichmann S.A."/>
            <person name="Ueda H.R."/>
            <person name="van Nimwegen E."/>
            <person name="Verardo R."/>
            <person name="Wei C.L."/>
            <person name="Yagi K."/>
            <person name="Yamanishi H."/>
            <person name="Zabarovsky E."/>
            <person name="Zhu S."/>
            <person name="Zimmer A."/>
            <person name="Hide W."/>
            <person name="Bult C."/>
            <person name="Grimmond S.M."/>
            <person name="Teasdale R.D."/>
            <person name="Liu E.T."/>
            <person name="Brusic V."/>
            <person name="Quackenbush J."/>
            <person name="Wahlestedt C."/>
            <person name="Mattick J.S."/>
            <person name="Hume D.A."/>
            <person name="Kai C."/>
            <person name="Sasaki D."/>
            <person name="Tomaru Y."/>
            <person name="Fukuda S."/>
            <person name="Kanamori-Katayama M."/>
            <person name="Suzuki M."/>
            <person name="Aoki J."/>
            <person name="Arakawa T."/>
            <person name="Iida J."/>
            <person name="Imamura K."/>
            <person name="Itoh M."/>
            <person name="Kato T."/>
            <person name="Kawaji H."/>
            <person name="Kawagashira N."/>
            <person name="Kawashima T."/>
            <person name="Kojima M."/>
            <person name="Kondo S."/>
            <person name="Konno H."/>
            <person name="Nakano K."/>
            <person name="Ninomiya N."/>
            <person name="Nishio T."/>
            <person name="Okada M."/>
            <person name="Plessy C."/>
            <person name="Shibata K."/>
            <person name="Shiraki T."/>
            <person name="Suzuki S."/>
            <person name="Tagami M."/>
            <person name="Waki K."/>
            <person name="Watahiki A."/>
            <person name="Okamura-Oho Y."/>
            <person name="Suzuki H."/>
            <person name="Kawai J."/>
            <person name="Hayashizaki Y."/>
        </authorList>
    </citation>
    <scope>NUCLEOTIDE SEQUENCE [LARGE SCALE MRNA]</scope>
    <source>
        <strain>C57BL/6J</strain>
        <tissue>Head</tissue>
    </source>
</reference>
<reference key="2">
    <citation type="journal article" date="2010" name="Cell">
        <title>A tissue-specific atlas of mouse protein phosphorylation and expression.</title>
        <authorList>
            <person name="Huttlin E.L."/>
            <person name="Jedrychowski M.P."/>
            <person name="Elias J.E."/>
            <person name="Goswami T."/>
            <person name="Rad R."/>
            <person name="Beausoleil S.A."/>
            <person name="Villen J."/>
            <person name="Haas W."/>
            <person name="Sowa M.E."/>
            <person name="Gygi S.P."/>
        </authorList>
    </citation>
    <scope>PHOSPHORYLATION [LARGE SCALE ANALYSIS] AT SER-105; SER-108; THR-138; SER-140; SER-163; SER-175; SER-177; SER-342; SER-347; SER-371; SER-378; SER-381; SER-667; SER-675; THR-702; THR-710; SER-787; SER-789; THR-791; SER-890; THR-891 AND THR-897</scope>
    <scope>IDENTIFICATION BY MASS SPECTROMETRY [LARGE SCALE ANALYSIS]</scope>
    <source>
        <tissue>Brown adipose tissue</tissue>
        <tissue>Heart</tissue>
        <tissue>Lung</tissue>
    </source>
</reference>
<reference key="3">
    <citation type="journal article" date="2014" name="Mol. Cell. Proteomics">
        <title>Immunoaffinity enrichment and mass spectrometry analysis of protein methylation.</title>
        <authorList>
            <person name="Guo A."/>
            <person name="Gu H."/>
            <person name="Zhou J."/>
            <person name="Mulhern D."/>
            <person name="Wang Y."/>
            <person name="Lee K.A."/>
            <person name="Yang V."/>
            <person name="Aguiar M."/>
            <person name="Kornhauser J."/>
            <person name="Jia X."/>
            <person name="Ren J."/>
            <person name="Beausoleil S.A."/>
            <person name="Silva J.C."/>
            <person name="Vemulapalli V."/>
            <person name="Bedford M.T."/>
            <person name="Comb M.J."/>
        </authorList>
    </citation>
    <scope>METHYLATION [LARGE SCALE ANALYSIS] AT ARG-383; ARG-463; ARG-466; ARG-476; ARG-754; ARG-805; ARG-825; ARG-888; ARG-909; ARG-920; ARG-953 AND ARG-955</scope>
    <scope>IDENTIFICATION BY MASS SPECTROMETRY [LARGE SCALE ANALYSIS]</scope>
    <source>
        <tissue>Brain</tissue>
        <tissue>Embryo</tissue>
    </source>
</reference>
<organism>
    <name type="scientific">Mus musculus</name>
    <name type="common">Mouse</name>
    <dbReference type="NCBI Taxonomy" id="10090"/>
    <lineage>
        <taxon>Eukaryota</taxon>
        <taxon>Metazoa</taxon>
        <taxon>Chordata</taxon>
        <taxon>Craniata</taxon>
        <taxon>Vertebrata</taxon>
        <taxon>Euteleostomi</taxon>
        <taxon>Mammalia</taxon>
        <taxon>Eutheria</taxon>
        <taxon>Euarchontoglires</taxon>
        <taxon>Glires</taxon>
        <taxon>Rodentia</taxon>
        <taxon>Myomorpha</taxon>
        <taxon>Muroidea</taxon>
        <taxon>Muridae</taxon>
        <taxon>Murinae</taxon>
        <taxon>Mus</taxon>
        <taxon>Mus</taxon>
    </lineage>
</organism>
<dbReference type="EMBL" id="AK053054">
    <property type="protein sequence ID" value="BAC35251.1"/>
    <property type="molecule type" value="mRNA"/>
</dbReference>
<dbReference type="CCDS" id="CCDS26849.1"/>
<dbReference type="RefSeq" id="NP_001297361.1">
    <property type="nucleotide sequence ID" value="NM_001310432.1"/>
</dbReference>
<dbReference type="RefSeq" id="NP_780341.1">
    <property type="nucleotide sequence ID" value="NM_175132.4"/>
</dbReference>
<dbReference type="SMR" id="Q8BWB1"/>
<dbReference type="BioGRID" id="213035">
    <property type="interactions" value="1"/>
</dbReference>
<dbReference type="FunCoup" id="Q8BWB1">
    <property type="interactions" value="347"/>
</dbReference>
<dbReference type="STRING" id="10090.ENSMUSP00000112792"/>
<dbReference type="GlyGen" id="Q8BWB1">
    <property type="glycosylation" value="8 sites, 1 O-linked glycan (1 site)"/>
</dbReference>
<dbReference type="iPTMnet" id="Q8BWB1"/>
<dbReference type="PhosphoSitePlus" id="Q8BWB1"/>
<dbReference type="jPOST" id="Q8BWB1"/>
<dbReference type="PaxDb" id="10090-ENSMUSP00000053176"/>
<dbReference type="ProteomicsDB" id="254789"/>
<dbReference type="Antibodypedia" id="45402">
    <property type="antibodies" value="72 antibodies from 22 providers"/>
</dbReference>
<dbReference type="DNASU" id="68760"/>
<dbReference type="Ensembl" id="ENSMUST00000057090.12">
    <property type="protein sequence ID" value="ENSMUSP00000053176.6"/>
    <property type="gene ID" value="ENSMUSG00000039376.14"/>
</dbReference>
<dbReference type="GeneID" id="68760"/>
<dbReference type="KEGG" id="mmu:68760"/>
<dbReference type="UCSC" id="uc007skf.1">
    <property type="organism name" value="mouse"/>
</dbReference>
<dbReference type="AGR" id="MGI:1916010"/>
<dbReference type="CTD" id="79933"/>
<dbReference type="MGI" id="MGI:1916010">
    <property type="gene designation" value="Synpo2l"/>
</dbReference>
<dbReference type="VEuPathDB" id="HostDB:ENSMUSG00000039376"/>
<dbReference type="eggNOG" id="KOG1703">
    <property type="taxonomic scope" value="Eukaryota"/>
</dbReference>
<dbReference type="GeneTree" id="ENSGT00950000183054"/>
<dbReference type="InParanoid" id="Q8BWB1"/>
<dbReference type="OrthoDB" id="8882674at2759"/>
<dbReference type="PhylomeDB" id="Q8BWB1"/>
<dbReference type="TreeFam" id="TF330867"/>
<dbReference type="BioGRID-ORCS" id="68760">
    <property type="hits" value="1 hit in 77 CRISPR screens"/>
</dbReference>
<dbReference type="ChiTaRS" id="Synpo2l">
    <property type="organism name" value="mouse"/>
</dbReference>
<dbReference type="PRO" id="PR:Q8BWB1"/>
<dbReference type="Proteomes" id="UP000000589">
    <property type="component" value="Chromosome 14"/>
</dbReference>
<dbReference type="RNAct" id="Q8BWB1">
    <property type="molecule type" value="protein"/>
</dbReference>
<dbReference type="Bgee" id="ENSMUSG00000039376">
    <property type="expression patterns" value="Expressed in atrioventricular valve and 137 other cell types or tissues"/>
</dbReference>
<dbReference type="ExpressionAtlas" id="Q8BWB1">
    <property type="expression patterns" value="baseline and differential"/>
</dbReference>
<dbReference type="GO" id="GO:0005856">
    <property type="term" value="C:cytoskeleton"/>
    <property type="evidence" value="ECO:0007669"/>
    <property type="project" value="UniProtKB-SubCell"/>
</dbReference>
<dbReference type="GO" id="GO:0005634">
    <property type="term" value="C:nucleus"/>
    <property type="evidence" value="ECO:0000314"/>
    <property type="project" value="MGI"/>
</dbReference>
<dbReference type="GO" id="GO:0030018">
    <property type="term" value="C:Z disc"/>
    <property type="evidence" value="ECO:0000314"/>
    <property type="project" value="BHF-UCL"/>
</dbReference>
<dbReference type="GO" id="GO:0003779">
    <property type="term" value="F:actin binding"/>
    <property type="evidence" value="ECO:0007669"/>
    <property type="project" value="UniProtKB-KW"/>
</dbReference>
<dbReference type="GO" id="GO:0003007">
    <property type="term" value="P:heart morphogenesis"/>
    <property type="evidence" value="ECO:0000315"/>
    <property type="project" value="BHF-UCL"/>
</dbReference>
<dbReference type="GO" id="GO:0035025">
    <property type="term" value="P:positive regulation of Rho protein signal transduction"/>
    <property type="evidence" value="ECO:0000315"/>
    <property type="project" value="BHF-UCL"/>
</dbReference>
<dbReference type="GO" id="GO:0051496">
    <property type="term" value="P:positive regulation of stress fiber assembly"/>
    <property type="evidence" value="ECO:0000315"/>
    <property type="project" value="BHF-UCL"/>
</dbReference>
<dbReference type="GO" id="GO:0045214">
    <property type="term" value="P:sarcomere organization"/>
    <property type="evidence" value="ECO:0000315"/>
    <property type="project" value="BHF-UCL"/>
</dbReference>
<dbReference type="CDD" id="cd10820">
    <property type="entry name" value="PDZ_SYNPO2-like"/>
    <property type="match status" value="1"/>
</dbReference>
<dbReference type="FunFam" id="2.30.42.10:FF:000137">
    <property type="entry name" value="Synaptopodin 2-like a"/>
    <property type="match status" value="1"/>
</dbReference>
<dbReference type="Gene3D" id="2.30.42.10">
    <property type="match status" value="1"/>
</dbReference>
<dbReference type="InterPro" id="IPR001478">
    <property type="entry name" value="PDZ"/>
</dbReference>
<dbReference type="InterPro" id="IPR036034">
    <property type="entry name" value="PDZ_sf"/>
</dbReference>
<dbReference type="InterPro" id="IPR051976">
    <property type="entry name" value="Synaptopodin_domain"/>
</dbReference>
<dbReference type="PANTHER" id="PTHR24217">
    <property type="entry name" value="PUTATIVE-RELATED"/>
    <property type="match status" value="1"/>
</dbReference>
<dbReference type="PANTHER" id="PTHR24217:SF10">
    <property type="entry name" value="SYNAPTOPODIN 2-LIKE PROTEIN"/>
    <property type="match status" value="1"/>
</dbReference>
<dbReference type="Pfam" id="PF00595">
    <property type="entry name" value="PDZ"/>
    <property type="match status" value="1"/>
</dbReference>
<dbReference type="SMART" id="SM00228">
    <property type="entry name" value="PDZ"/>
    <property type="match status" value="1"/>
</dbReference>
<dbReference type="SUPFAM" id="SSF50156">
    <property type="entry name" value="PDZ domain-like"/>
    <property type="match status" value="1"/>
</dbReference>
<dbReference type="PROSITE" id="PS50106">
    <property type="entry name" value="PDZ"/>
    <property type="match status" value="1"/>
</dbReference>
<feature type="chain" id="PRO_0000187676" description="Synaptopodin 2-like protein">
    <location>
        <begin position="1"/>
        <end position="975"/>
    </location>
</feature>
<feature type="domain" description="PDZ" evidence="2">
    <location>
        <begin position="6"/>
        <end position="85"/>
    </location>
</feature>
<feature type="region of interest" description="Disordered" evidence="3">
    <location>
        <begin position="18"/>
        <end position="41"/>
    </location>
</feature>
<feature type="region of interest" description="Disordered" evidence="3">
    <location>
        <begin position="86"/>
        <end position="214"/>
    </location>
</feature>
<feature type="region of interest" description="Disordered" evidence="3">
    <location>
        <begin position="314"/>
        <end position="349"/>
    </location>
</feature>
<feature type="region of interest" description="Disordered" evidence="3">
    <location>
        <begin position="491"/>
        <end position="649"/>
    </location>
</feature>
<feature type="region of interest" description="Disordered" evidence="3">
    <location>
        <begin position="687"/>
        <end position="731"/>
    </location>
</feature>
<feature type="region of interest" description="Disordered" evidence="3">
    <location>
        <begin position="772"/>
        <end position="797"/>
    </location>
</feature>
<feature type="compositionally biased region" description="Polar residues" evidence="3">
    <location>
        <begin position="187"/>
        <end position="200"/>
    </location>
</feature>
<feature type="compositionally biased region" description="Low complexity" evidence="3">
    <location>
        <begin position="202"/>
        <end position="214"/>
    </location>
</feature>
<feature type="compositionally biased region" description="Polar residues" evidence="3">
    <location>
        <begin position="339"/>
        <end position="349"/>
    </location>
</feature>
<feature type="compositionally biased region" description="Pro residues" evidence="3">
    <location>
        <begin position="502"/>
        <end position="516"/>
    </location>
</feature>
<feature type="compositionally biased region" description="Polar residues" evidence="3">
    <location>
        <begin position="519"/>
        <end position="528"/>
    </location>
</feature>
<feature type="compositionally biased region" description="Low complexity" evidence="3">
    <location>
        <begin position="530"/>
        <end position="540"/>
    </location>
</feature>
<feature type="compositionally biased region" description="Low complexity" evidence="3">
    <location>
        <begin position="571"/>
        <end position="580"/>
    </location>
</feature>
<feature type="compositionally biased region" description="Pro residues" evidence="3">
    <location>
        <begin position="701"/>
        <end position="724"/>
    </location>
</feature>
<feature type="modified residue" description="Phosphoserine" evidence="5">
    <location>
        <position position="105"/>
    </location>
</feature>
<feature type="modified residue" description="Phosphoserine" evidence="5">
    <location>
        <position position="108"/>
    </location>
</feature>
<feature type="modified residue" description="Phosphothreonine" evidence="5">
    <location>
        <position position="138"/>
    </location>
</feature>
<feature type="modified residue" description="Phosphoserine" evidence="5">
    <location>
        <position position="140"/>
    </location>
</feature>
<feature type="modified residue" description="Phosphoserine" evidence="5">
    <location>
        <position position="163"/>
    </location>
</feature>
<feature type="modified residue" description="Phosphoserine" evidence="5">
    <location>
        <position position="175"/>
    </location>
</feature>
<feature type="modified residue" description="Phosphoserine" evidence="5">
    <location>
        <position position="177"/>
    </location>
</feature>
<feature type="modified residue" description="Phosphoserine" evidence="5">
    <location>
        <position position="342"/>
    </location>
</feature>
<feature type="modified residue" description="Phosphoserine" evidence="5">
    <location>
        <position position="347"/>
    </location>
</feature>
<feature type="modified residue" description="Phosphoserine" evidence="5">
    <location>
        <position position="371"/>
    </location>
</feature>
<feature type="modified residue" description="Phosphoserine" evidence="5">
    <location>
        <position position="378"/>
    </location>
</feature>
<feature type="modified residue" description="Phosphoserine" evidence="5">
    <location>
        <position position="381"/>
    </location>
</feature>
<feature type="modified residue" description="Omega-N-methylarginine" evidence="6">
    <location>
        <position position="383"/>
    </location>
</feature>
<feature type="modified residue" description="Omega-N-methylarginine" evidence="6">
    <location>
        <position position="463"/>
    </location>
</feature>
<feature type="modified residue" description="Omega-N-methylarginine" evidence="6">
    <location>
        <position position="466"/>
    </location>
</feature>
<feature type="modified residue" description="Omega-N-methylarginine" evidence="6">
    <location>
        <position position="476"/>
    </location>
</feature>
<feature type="modified residue" description="Phosphoserine" evidence="5">
    <location>
        <position position="667"/>
    </location>
</feature>
<feature type="modified residue" description="Phosphoserine" evidence="5">
    <location>
        <position position="675"/>
    </location>
</feature>
<feature type="modified residue" description="Phosphothreonine" evidence="5">
    <location>
        <position position="702"/>
    </location>
</feature>
<feature type="modified residue" description="Phosphothreonine" evidence="5">
    <location>
        <position position="710"/>
    </location>
</feature>
<feature type="modified residue" description="Omega-N-methylarginine" evidence="6">
    <location>
        <position position="754"/>
    </location>
</feature>
<feature type="modified residue" description="Phosphoserine" evidence="5">
    <location>
        <position position="787"/>
    </location>
</feature>
<feature type="modified residue" description="Phosphoserine" evidence="5">
    <location>
        <position position="789"/>
    </location>
</feature>
<feature type="modified residue" description="Phosphothreonine" evidence="5">
    <location>
        <position position="791"/>
    </location>
</feature>
<feature type="modified residue" description="Omega-N-methylarginine" evidence="6">
    <location>
        <position position="805"/>
    </location>
</feature>
<feature type="modified residue" description="Omega-N-methylarginine" evidence="6">
    <location>
        <position position="825"/>
    </location>
</feature>
<feature type="modified residue" description="Omega-N-methylarginine" evidence="6">
    <location>
        <position position="888"/>
    </location>
</feature>
<feature type="modified residue" description="Phosphoserine" evidence="5">
    <location>
        <position position="890"/>
    </location>
</feature>
<feature type="modified residue" description="Phosphothreonine" evidence="5">
    <location>
        <position position="891"/>
    </location>
</feature>
<feature type="modified residue" description="Phosphothreonine" evidence="5">
    <location>
        <position position="897"/>
    </location>
</feature>
<feature type="modified residue" description="Omega-N-methylarginine" evidence="6">
    <location>
        <position position="909"/>
    </location>
</feature>
<feature type="modified residue" description="Asymmetric dimethylarginine; alternate" evidence="6">
    <location>
        <position position="920"/>
    </location>
</feature>
<feature type="modified residue" description="Omega-N-methylarginine; alternate" evidence="6">
    <location>
        <position position="920"/>
    </location>
</feature>
<feature type="modified residue" description="Omega-N-methylarginine" evidence="6">
    <location>
        <position position="953"/>
    </location>
</feature>
<feature type="modified residue" description="Omega-N-methylarginine" evidence="6">
    <location>
        <position position="955"/>
    </location>
</feature>
<evidence type="ECO:0000250" key="1"/>
<evidence type="ECO:0000255" key="2">
    <source>
        <dbReference type="PROSITE-ProRule" id="PRU00143"/>
    </source>
</evidence>
<evidence type="ECO:0000256" key="3">
    <source>
        <dbReference type="SAM" id="MobiDB-lite"/>
    </source>
</evidence>
<evidence type="ECO:0000305" key="4"/>
<evidence type="ECO:0007744" key="5">
    <source>
    </source>
</evidence>
<evidence type="ECO:0007744" key="6">
    <source>
    </source>
</evidence>
<gene>
    <name type="primary">Synpo2l</name>
</gene>
<keyword id="KW-0009">Actin-binding</keyword>
<keyword id="KW-0963">Cytoplasm</keyword>
<keyword id="KW-0206">Cytoskeleton</keyword>
<keyword id="KW-0488">Methylation</keyword>
<keyword id="KW-0597">Phosphoprotein</keyword>
<keyword id="KW-1185">Reference proteome</keyword>
<accession>Q8BWB1</accession>
<name>SYP2L_MOUSE</name>